<gene>
    <name evidence="1" type="primary">frmR</name>
    <name type="ordered locus">ECP_0422</name>
</gene>
<reference key="1">
    <citation type="journal article" date="2006" name="Mol. Microbiol.">
        <title>Role of pathogenicity island-associated integrases in the genome plasticity of uropathogenic Escherichia coli strain 536.</title>
        <authorList>
            <person name="Hochhut B."/>
            <person name="Wilde C."/>
            <person name="Balling G."/>
            <person name="Middendorf B."/>
            <person name="Dobrindt U."/>
            <person name="Brzuszkiewicz E."/>
            <person name="Gottschalk G."/>
            <person name="Carniel E."/>
            <person name="Hacker J."/>
        </authorList>
    </citation>
    <scope>NUCLEOTIDE SEQUENCE [LARGE SCALE GENOMIC DNA]</scope>
    <source>
        <strain>536 / UPEC</strain>
    </source>
</reference>
<sequence length="91" mass="10318">MPSTPEEKKKVLTRVRRIRGQIDALERSLEGDAECRAILQQIAAVRGAANGLMAEVLESHIRETFDRNDCYSREVSQSVDDTIELVRAYLK</sequence>
<proteinExistence type="inferred from homology"/>
<protein>
    <recommendedName>
        <fullName evidence="1">Transcriptional repressor FrmR</fullName>
    </recommendedName>
</protein>
<feature type="chain" id="PRO_0000340126" description="Transcriptional repressor FrmR">
    <location>
        <begin position="1"/>
        <end position="91"/>
    </location>
</feature>
<feature type="site" description="Important for response to formaldehyde" evidence="1">
    <location>
        <position position="2"/>
    </location>
</feature>
<feature type="site" description="Important for response to formaldehyde" evidence="1">
    <location>
        <position position="35"/>
    </location>
</feature>
<evidence type="ECO:0000250" key="1">
    <source>
        <dbReference type="UniProtKB" id="P0AAP3"/>
    </source>
</evidence>
<evidence type="ECO:0000305" key="2"/>
<organism>
    <name type="scientific">Escherichia coli O6:K15:H31 (strain 536 / UPEC)</name>
    <dbReference type="NCBI Taxonomy" id="362663"/>
    <lineage>
        <taxon>Bacteria</taxon>
        <taxon>Pseudomonadati</taxon>
        <taxon>Pseudomonadota</taxon>
        <taxon>Gammaproteobacteria</taxon>
        <taxon>Enterobacterales</taxon>
        <taxon>Enterobacteriaceae</taxon>
        <taxon>Escherichia</taxon>
    </lineage>
</organism>
<name>FRMR_ECOL5</name>
<accession>Q0TKS6</accession>
<keyword id="KW-0963">Cytoplasm</keyword>
<keyword id="KW-0238">DNA-binding</keyword>
<keyword id="KW-0678">Repressor</keyword>
<keyword id="KW-0804">Transcription</keyword>
<keyword id="KW-0805">Transcription regulation</keyword>
<comment type="function">
    <text evidence="1">Formaldehyde sensor. In the absence of formaldehyde, mediates repression of the frmRAB operon. Acts by binding directly to the frmRAB promoter region. In the presence of formaldehyde, it dissociates from the frmRAB promoter region and allows expression of the formaldehyde detoxification system encoded by frmA and frmB.</text>
</comment>
<comment type="subunit">
    <text evidence="1">Homotetramer.</text>
</comment>
<comment type="subcellular location">
    <subcellularLocation>
        <location evidence="1">Cytoplasm</location>
    </subcellularLocation>
</comment>
<comment type="similarity">
    <text evidence="2">Belongs to the FrmR/RcnR family.</text>
</comment>
<dbReference type="EMBL" id="CP000247">
    <property type="protein sequence ID" value="ABG68455.1"/>
    <property type="molecule type" value="Genomic_DNA"/>
</dbReference>
<dbReference type="RefSeq" id="WP_001141271.1">
    <property type="nucleotide sequence ID" value="NC_008253.1"/>
</dbReference>
<dbReference type="SMR" id="Q0TKS6"/>
<dbReference type="GeneID" id="93777098"/>
<dbReference type="KEGG" id="ecp:ECP_0422"/>
<dbReference type="HOGENOM" id="CLU_130332_3_0_6"/>
<dbReference type="Proteomes" id="UP000009182">
    <property type="component" value="Chromosome"/>
</dbReference>
<dbReference type="GO" id="GO:0005737">
    <property type="term" value="C:cytoplasm"/>
    <property type="evidence" value="ECO:0007669"/>
    <property type="project" value="UniProtKB-SubCell"/>
</dbReference>
<dbReference type="GO" id="GO:0003677">
    <property type="term" value="F:DNA binding"/>
    <property type="evidence" value="ECO:0007669"/>
    <property type="project" value="UniProtKB-KW"/>
</dbReference>
<dbReference type="GO" id="GO:0046872">
    <property type="term" value="F:metal ion binding"/>
    <property type="evidence" value="ECO:0007669"/>
    <property type="project" value="InterPro"/>
</dbReference>
<dbReference type="GO" id="GO:0045892">
    <property type="term" value="P:negative regulation of DNA-templated transcription"/>
    <property type="evidence" value="ECO:0007669"/>
    <property type="project" value="UniProtKB-ARBA"/>
</dbReference>
<dbReference type="CDD" id="cd10153">
    <property type="entry name" value="RcnR-FrmR-like_DUF156"/>
    <property type="match status" value="1"/>
</dbReference>
<dbReference type="FunFam" id="1.20.58.1000:FF:000002">
    <property type="entry name" value="Transcriptional repressor FrmR"/>
    <property type="match status" value="1"/>
</dbReference>
<dbReference type="Gene3D" id="1.20.58.1000">
    <property type="entry name" value="Metal-sensitive repressor, helix protomer"/>
    <property type="match status" value="1"/>
</dbReference>
<dbReference type="InterPro" id="IPR003735">
    <property type="entry name" value="Metal_Tscrpt_repr"/>
</dbReference>
<dbReference type="InterPro" id="IPR038390">
    <property type="entry name" value="Metal_Tscrpt_repr_sf"/>
</dbReference>
<dbReference type="NCBIfam" id="NF008464">
    <property type="entry name" value="PRK11352.1"/>
    <property type="match status" value="1"/>
</dbReference>
<dbReference type="PANTHER" id="PTHR33677:SF5">
    <property type="entry name" value="TRANSCRIPTIONAL REPRESSOR FRMR"/>
    <property type="match status" value="1"/>
</dbReference>
<dbReference type="PANTHER" id="PTHR33677">
    <property type="entry name" value="TRANSCRIPTIONAL REPRESSOR FRMR-RELATED"/>
    <property type="match status" value="1"/>
</dbReference>
<dbReference type="Pfam" id="PF02583">
    <property type="entry name" value="Trns_repr_metal"/>
    <property type="match status" value="1"/>
</dbReference>